<organism>
    <name type="scientific">Streptococcus pyogenes serotype M4 (strain MGAS10750)</name>
    <dbReference type="NCBI Taxonomy" id="370554"/>
    <lineage>
        <taxon>Bacteria</taxon>
        <taxon>Bacillati</taxon>
        <taxon>Bacillota</taxon>
        <taxon>Bacilli</taxon>
        <taxon>Lactobacillales</taxon>
        <taxon>Streptococcaceae</taxon>
        <taxon>Streptococcus</taxon>
    </lineage>
</organism>
<gene>
    <name evidence="1" type="primary">rpsP</name>
    <name type="ordered locus">MGAS10750_Spy0738</name>
</gene>
<protein>
    <recommendedName>
        <fullName evidence="1">Small ribosomal subunit protein bS16</fullName>
    </recommendedName>
    <alternativeName>
        <fullName evidence="2">30S ribosomal protein S16</fullName>
    </alternativeName>
</protein>
<dbReference type="EMBL" id="CP000262">
    <property type="protein sequence ID" value="ABF37688.1"/>
    <property type="molecule type" value="Genomic_DNA"/>
</dbReference>
<dbReference type="SMR" id="Q1J786"/>
<dbReference type="KEGG" id="spi:MGAS10750_Spy0738"/>
<dbReference type="HOGENOM" id="CLU_100590_5_0_9"/>
<dbReference type="Proteomes" id="UP000002434">
    <property type="component" value="Chromosome"/>
</dbReference>
<dbReference type="GO" id="GO:0005737">
    <property type="term" value="C:cytoplasm"/>
    <property type="evidence" value="ECO:0007669"/>
    <property type="project" value="UniProtKB-ARBA"/>
</dbReference>
<dbReference type="GO" id="GO:0015935">
    <property type="term" value="C:small ribosomal subunit"/>
    <property type="evidence" value="ECO:0007669"/>
    <property type="project" value="TreeGrafter"/>
</dbReference>
<dbReference type="GO" id="GO:0003735">
    <property type="term" value="F:structural constituent of ribosome"/>
    <property type="evidence" value="ECO:0007669"/>
    <property type="project" value="InterPro"/>
</dbReference>
<dbReference type="GO" id="GO:0006412">
    <property type="term" value="P:translation"/>
    <property type="evidence" value="ECO:0007669"/>
    <property type="project" value="UniProtKB-UniRule"/>
</dbReference>
<dbReference type="FunFam" id="3.30.1320.10:FF:000002">
    <property type="entry name" value="30S ribosomal protein S16"/>
    <property type="match status" value="1"/>
</dbReference>
<dbReference type="Gene3D" id="3.30.1320.10">
    <property type="match status" value="1"/>
</dbReference>
<dbReference type="HAMAP" id="MF_00385">
    <property type="entry name" value="Ribosomal_bS16"/>
    <property type="match status" value="1"/>
</dbReference>
<dbReference type="InterPro" id="IPR000307">
    <property type="entry name" value="Ribosomal_bS16"/>
</dbReference>
<dbReference type="InterPro" id="IPR023803">
    <property type="entry name" value="Ribosomal_bS16_dom_sf"/>
</dbReference>
<dbReference type="NCBIfam" id="TIGR00002">
    <property type="entry name" value="S16"/>
    <property type="match status" value="1"/>
</dbReference>
<dbReference type="PANTHER" id="PTHR12919">
    <property type="entry name" value="30S RIBOSOMAL PROTEIN S16"/>
    <property type="match status" value="1"/>
</dbReference>
<dbReference type="PANTHER" id="PTHR12919:SF20">
    <property type="entry name" value="SMALL RIBOSOMAL SUBUNIT PROTEIN BS16M"/>
    <property type="match status" value="1"/>
</dbReference>
<dbReference type="Pfam" id="PF00886">
    <property type="entry name" value="Ribosomal_S16"/>
    <property type="match status" value="1"/>
</dbReference>
<dbReference type="SUPFAM" id="SSF54565">
    <property type="entry name" value="Ribosomal protein S16"/>
    <property type="match status" value="1"/>
</dbReference>
<keyword id="KW-0687">Ribonucleoprotein</keyword>
<keyword id="KW-0689">Ribosomal protein</keyword>
<evidence type="ECO:0000255" key="1">
    <source>
        <dbReference type="HAMAP-Rule" id="MF_00385"/>
    </source>
</evidence>
<evidence type="ECO:0000305" key="2"/>
<sequence>MAVKIRLTRMGSKKKPFYRINVADSRAPRDGRFIETVGTYNPLVAENQITIKEDRVLEWLSKGAQPSDTVRNILSKAGVMAKFHDQKFSK</sequence>
<reference key="1">
    <citation type="journal article" date="2006" name="Proc. Natl. Acad. Sci. U.S.A.">
        <title>Molecular genetic anatomy of inter- and intraserotype variation in the human bacterial pathogen group A Streptococcus.</title>
        <authorList>
            <person name="Beres S.B."/>
            <person name="Richter E.W."/>
            <person name="Nagiec M.J."/>
            <person name="Sumby P."/>
            <person name="Porcella S.F."/>
            <person name="DeLeo F.R."/>
            <person name="Musser J.M."/>
        </authorList>
    </citation>
    <scope>NUCLEOTIDE SEQUENCE [LARGE SCALE GENOMIC DNA]</scope>
    <source>
        <strain>MGAS10750</strain>
    </source>
</reference>
<proteinExistence type="inferred from homology"/>
<comment type="similarity">
    <text evidence="1">Belongs to the bacterial ribosomal protein bS16 family.</text>
</comment>
<feature type="chain" id="PRO_1000049362" description="Small ribosomal subunit protein bS16">
    <location>
        <begin position="1"/>
        <end position="90"/>
    </location>
</feature>
<accession>Q1J786</accession>
<name>RS16_STRPF</name>